<comment type="function">
    <text evidence="1">Glycosyltransferase which elongates the O-linked glucose attached to EGF-like repeats in the extracellular domain of Notch proteins by catalyzing the addition of xylose.</text>
</comment>
<comment type="catalytic activity">
    <reaction evidence="1">
        <text>3-O-(beta-D-glucosyl)-L-seryl-[EGF-like domain protein] + UDP-alpha-D-xylose = 3-O-[alpha-D-xylosyl-(1-&gt;3)-beta-D-glucosyl]-L-seryl-[EGF-like domain protein] + UDP + H(+)</text>
        <dbReference type="Rhea" id="RHEA:56064"/>
        <dbReference type="Rhea" id="RHEA-COMP:14610"/>
        <dbReference type="Rhea" id="RHEA-COMP:14611"/>
        <dbReference type="ChEBI" id="CHEBI:15378"/>
        <dbReference type="ChEBI" id="CHEBI:57632"/>
        <dbReference type="ChEBI" id="CHEBI:58223"/>
        <dbReference type="ChEBI" id="CHEBI:140575"/>
        <dbReference type="ChEBI" id="CHEBI:140576"/>
        <dbReference type="EC" id="2.4.2.42"/>
    </reaction>
</comment>
<comment type="subcellular location">
    <subcellularLocation>
        <location evidence="4">Membrane</location>
        <topology evidence="4">Single-pass type II membrane protein</topology>
    </subcellularLocation>
</comment>
<comment type="similarity">
    <text evidence="4">Belongs to the glycosyltransferase 8 family.</text>
</comment>
<evidence type="ECO:0000250" key="1">
    <source>
        <dbReference type="UniProtKB" id="Q4G148"/>
    </source>
</evidence>
<evidence type="ECO:0000255" key="2"/>
<evidence type="ECO:0000256" key="3">
    <source>
        <dbReference type="SAM" id="MobiDB-lite"/>
    </source>
</evidence>
<evidence type="ECO:0000305" key="4"/>
<keyword id="KW-0325">Glycoprotein</keyword>
<keyword id="KW-0328">Glycosyltransferase</keyword>
<keyword id="KW-0472">Membrane</keyword>
<keyword id="KW-1185">Reference proteome</keyword>
<keyword id="KW-0735">Signal-anchor</keyword>
<keyword id="KW-0808">Transferase</keyword>
<keyword id="KW-0812">Transmembrane</keyword>
<keyword id="KW-1133">Transmembrane helix</keyword>
<proteinExistence type="evidence at transcript level"/>
<protein>
    <recommendedName>
        <fullName>Glucoside xylosyltransferase 1</fullName>
        <ecNumber evidence="1">2.4.2.42</ecNumber>
    </recommendedName>
    <alternativeName>
        <fullName>Glycosyltransferase 8 domain-containing protein 3</fullName>
    </alternativeName>
</protein>
<feature type="chain" id="PRO_0000288537" description="Glucoside xylosyltransferase 1">
    <location>
        <begin position="1"/>
        <end position="433"/>
    </location>
</feature>
<feature type="topological domain" description="Cytoplasmic" evidence="2">
    <location>
        <begin position="1"/>
        <end position="6"/>
    </location>
</feature>
<feature type="transmembrane region" description="Helical; Signal-anchor for type II membrane protein" evidence="2">
    <location>
        <begin position="7"/>
        <end position="29"/>
    </location>
</feature>
<feature type="topological domain" description="Lumenal" evidence="2">
    <location>
        <begin position="30"/>
        <end position="433"/>
    </location>
</feature>
<feature type="region of interest" description="Disordered" evidence="3">
    <location>
        <begin position="39"/>
        <end position="64"/>
    </location>
</feature>
<feature type="glycosylation site" description="N-linked (GlcNAc...) asparagine" evidence="2">
    <location>
        <position position="69"/>
    </location>
</feature>
<feature type="glycosylation site" description="N-linked (GlcNAc...) asparagine" evidence="2">
    <location>
        <position position="166"/>
    </location>
</feature>
<feature type="glycosylation site" description="N-linked (GlcNAc...) asparagine" evidence="2">
    <location>
        <position position="271"/>
    </location>
</feature>
<feature type="glycosylation site" description="N-linked (GlcNAc...) asparagine" evidence="2">
    <location>
        <position position="305"/>
    </location>
</feature>
<feature type="glycosylation site" description="N-linked (GlcNAc...) asparagine" evidence="2">
    <location>
        <position position="380"/>
    </location>
</feature>
<name>GXLT1_CHICK</name>
<gene>
    <name type="primary">GXYLT1</name>
    <name type="synonym">GLT8D3</name>
    <name type="ORF">RCJMB04_10i5</name>
</gene>
<accession>Q5ZKI6</accession>
<sequence>MRRFARVALLFLGCGVCSLLYGVSQLALSLEQEAGGARQRQARESAAPGGGRQAGSADGGEEGAGRCKNLSVSFWNSYWMLPSDVCGVNCFWEAAFRYTYMETQPSETMHLAVVACGERLEETITMLRSAIIFSIKPLHFHIFAEDQLHESFKDILDDFPYEGKVNYTLYPITFPSEGAKEWKKLFKPCASQRLFLPLILKDVDSLLYVDTDILFLRPVDDIWSFLRKFDSTQIAAMAPEHEEPRIGWYNRFARHPYYGVTGINSGVMLMNMTRIRRKYFKNDMTSVRLRWAEILMPLLKKYKLNITWGDQDLLNIMFFHNPESLYVFPCQWNYRPDHCIYGSNCKEAEEEGIFILHGNRGVYHDDKQPTFRAVYEAIKNYSFGDDLVRSLLQPLELELQKTVHTYCGRVYEVFIKQLKKSIKDLSVRRSKGS</sequence>
<dbReference type="EC" id="2.4.2.42" evidence="1"/>
<dbReference type="EMBL" id="AJ720098">
    <property type="protein sequence ID" value="CAG31757.1"/>
    <property type="molecule type" value="mRNA"/>
</dbReference>
<dbReference type="RefSeq" id="NP_001025907.1">
    <property type="nucleotide sequence ID" value="NM_001030736.1"/>
</dbReference>
<dbReference type="SMR" id="Q5ZKI6"/>
<dbReference type="FunCoup" id="Q5ZKI6">
    <property type="interactions" value="1672"/>
</dbReference>
<dbReference type="STRING" id="9031.ENSGALP00000015499"/>
<dbReference type="CAZy" id="GT8">
    <property type="family name" value="Glycosyltransferase Family 8"/>
</dbReference>
<dbReference type="GlyCosmos" id="Q5ZKI6">
    <property type="glycosylation" value="5 sites, No reported glycans"/>
</dbReference>
<dbReference type="GlyGen" id="Q5ZKI6">
    <property type="glycosylation" value="5 sites"/>
</dbReference>
<dbReference type="PaxDb" id="9031-ENSGALP00000015499"/>
<dbReference type="GeneID" id="417789"/>
<dbReference type="KEGG" id="gga:417789"/>
<dbReference type="CTD" id="283464"/>
<dbReference type="VEuPathDB" id="HostDB:geneid_417789"/>
<dbReference type="eggNOG" id="KOG3765">
    <property type="taxonomic scope" value="Eukaryota"/>
</dbReference>
<dbReference type="InParanoid" id="Q5ZKI6"/>
<dbReference type="OrthoDB" id="6238971at2759"/>
<dbReference type="PhylomeDB" id="Q5ZKI6"/>
<dbReference type="PRO" id="PR:Q5ZKI6"/>
<dbReference type="Proteomes" id="UP000000539">
    <property type="component" value="Unassembled WGS sequence"/>
</dbReference>
<dbReference type="GO" id="GO:0016020">
    <property type="term" value="C:membrane"/>
    <property type="evidence" value="ECO:0007669"/>
    <property type="project" value="UniProtKB-SubCell"/>
</dbReference>
<dbReference type="GO" id="GO:0140563">
    <property type="term" value="F:UDP-D-xylose:beta-D-glucoside alpha-1,3-D-xylosyltransferase activity"/>
    <property type="evidence" value="ECO:0007669"/>
    <property type="project" value="UniProtKB-EC"/>
</dbReference>
<dbReference type="GO" id="GO:0035252">
    <property type="term" value="F:UDP-xylosyltransferase activity"/>
    <property type="evidence" value="ECO:0000250"/>
    <property type="project" value="UniProtKB"/>
</dbReference>
<dbReference type="GO" id="GO:0016266">
    <property type="term" value="P:O-glycan processing"/>
    <property type="evidence" value="ECO:0000250"/>
    <property type="project" value="UniProtKB"/>
</dbReference>
<dbReference type="CDD" id="cd06430">
    <property type="entry name" value="GT8_like_2"/>
    <property type="match status" value="1"/>
</dbReference>
<dbReference type="FunFam" id="3.90.550.10:FF:000042">
    <property type="entry name" value="Glucoside xylosyltransferase 1"/>
    <property type="match status" value="1"/>
</dbReference>
<dbReference type="Gene3D" id="3.90.550.10">
    <property type="entry name" value="Spore Coat Polysaccharide Biosynthesis Protein SpsA, Chain A"/>
    <property type="match status" value="1"/>
</dbReference>
<dbReference type="InterPro" id="IPR002495">
    <property type="entry name" value="Glyco_trans_8"/>
</dbReference>
<dbReference type="InterPro" id="IPR051993">
    <property type="entry name" value="Glycosyltransferase_8"/>
</dbReference>
<dbReference type="InterPro" id="IPR029044">
    <property type="entry name" value="Nucleotide-diphossugar_trans"/>
</dbReference>
<dbReference type="PANTHER" id="PTHR46012:SF3">
    <property type="entry name" value="GLUCOSIDE XYLOSYLTRANSFERASE 1"/>
    <property type="match status" value="1"/>
</dbReference>
<dbReference type="PANTHER" id="PTHR46012">
    <property type="entry name" value="IP22168P"/>
    <property type="match status" value="1"/>
</dbReference>
<dbReference type="Pfam" id="PF01501">
    <property type="entry name" value="Glyco_transf_8"/>
    <property type="match status" value="1"/>
</dbReference>
<dbReference type="SUPFAM" id="SSF53448">
    <property type="entry name" value="Nucleotide-diphospho-sugar transferases"/>
    <property type="match status" value="1"/>
</dbReference>
<reference key="1">
    <citation type="journal article" date="2005" name="Genome Biol.">
        <title>Full-length cDNAs from chicken bursal lymphocytes to facilitate gene function analysis.</title>
        <authorList>
            <person name="Caldwell R.B."/>
            <person name="Kierzek A.M."/>
            <person name="Arakawa H."/>
            <person name="Bezzubov Y."/>
            <person name="Zaim J."/>
            <person name="Fiedler P."/>
            <person name="Kutter S."/>
            <person name="Blagodatski A."/>
            <person name="Kostovska D."/>
            <person name="Koter M."/>
            <person name="Plachy J."/>
            <person name="Carninci P."/>
            <person name="Hayashizaki Y."/>
            <person name="Buerstedde J.-M."/>
        </authorList>
    </citation>
    <scope>NUCLEOTIDE SEQUENCE [LARGE SCALE MRNA]</scope>
    <source>
        <strain>CB</strain>
        <tissue>Bursa of Fabricius</tissue>
    </source>
</reference>
<organism>
    <name type="scientific">Gallus gallus</name>
    <name type="common">Chicken</name>
    <dbReference type="NCBI Taxonomy" id="9031"/>
    <lineage>
        <taxon>Eukaryota</taxon>
        <taxon>Metazoa</taxon>
        <taxon>Chordata</taxon>
        <taxon>Craniata</taxon>
        <taxon>Vertebrata</taxon>
        <taxon>Euteleostomi</taxon>
        <taxon>Archelosauria</taxon>
        <taxon>Archosauria</taxon>
        <taxon>Dinosauria</taxon>
        <taxon>Saurischia</taxon>
        <taxon>Theropoda</taxon>
        <taxon>Coelurosauria</taxon>
        <taxon>Aves</taxon>
        <taxon>Neognathae</taxon>
        <taxon>Galloanserae</taxon>
        <taxon>Galliformes</taxon>
        <taxon>Phasianidae</taxon>
        <taxon>Phasianinae</taxon>
        <taxon>Gallus</taxon>
    </lineage>
</organism>